<dbReference type="EC" id="2.7.7.56" evidence="1"/>
<dbReference type="EMBL" id="CP000611">
    <property type="protein sequence ID" value="ABQ73090.1"/>
    <property type="molecule type" value="Genomic_DNA"/>
</dbReference>
<dbReference type="RefSeq" id="WP_003406926.1">
    <property type="nucleotide sequence ID" value="NZ_CP016972.1"/>
</dbReference>
<dbReference type="SMR" id="A5U240"/>
<dbReference type="KEGG" id="mra:MRA_1348"/>
<dbReference type="eggNOG" id="COG2123">
    <property type="taxonomic scope" value="Bacteria"/>
</dbReference>
<dbReference type="HOGENOM" id="CLU_050858_0_0_11"/>
<dbReference type="Proteomes" id="UP000001988">
    <property type="component" value="Chromosome"/>
</dbReference>
<dbReference type="GO" id="GO:0000175">
    <property type="term" value="F:3'-5'-RNA exonuclease activity"/>
    <property type="evidence" value="ECO:0007669"/>
    <property type="project" value="UniProtKB-UniRule"/>
</dbReference>
<dbReference type="GO" id="GO:0000049">
    <property type="term" value="F:tRNA binding"/>
    <property type="evidence" value="ECO:0007669"/>
    <property type="project" value="UniProtKB-UniRule"/>
</dbReference>
<dbReference type="GO" id="GO:0009022">
    <property type="term" value="F:tRNA nucleotidyltransferase activity"/>
    <property type="evidence" value="ECO:0007669"/>
    <property type="project" value="UniProtKB-UniRule"/>
</dbReference>
<dbReference type="GO" id="GO:0016075">
    <property type="term" value="P:rRNA catabolic process"/>
    <property type="evidence" value="ECO:0007669"/>
    <property type="project" value="UniProtKB-UniRule"/>
</dbReference>
<dbReference type="GO" id="GO:0006364">
    <property type="term" value="P:rRNA processing"/>
    <property type="evidence" value="ECO:0007669"/>
    <property type="project" value="UniProtKB-KW"/>
</dbReference>
<dbReference type="GO" id="GO:0008033">
    <property type="term" value="P:tRNA processing"/>
    <property type="evidence" value="ECO:0007669"/>
    <property type="project" value="UniProtKB-UniRule"/>
</dbReference>
<dbReference type="CDD" id="cd11362">
    <property type="entry name" value="RNase_PH_bact"/>
    <property type="match status" value="1"/>
</dbReference>
<dbReference type="FunFam" id="3.30.230.70:FF:000003">
    <property type="entry name" value="Ribonuclease PH"/>
    <property type="match status" value="1"/>
</dbReference>
<dbReference type="Gene3D" id="3.30.230.70">
    <property type="entry name" value="GHMP Kinase, N-terminal domain"/>
    <property type="match status" value="1"/>
</dbReference>
<dbReference type="HAMAP" id="MF_00564">
    <property type="entry name" value="RNase_PH"/>
    <property type="match status" value="1"/>
</dbReference>
<dbReference type="InterPro" id="IPR001247">
    <property type="entry name" value="ExoRNase_PH_dom1"/>
</dbReference>
<dbReference type="InterPro" id="IPR015847">
    <property type="entry name" value="ExoRNase_PH_dom2"/>
</dbReference>
<dbReference type="InterPro" id="IPR036345">
    <property type="entry name" value="ExoRNase_PH_dom2_sf"/>
</dbReference>
<dbReference type="InterPro" id="IPR027408">
    <property type="entry name" value="PNPase/RNase_PH_dom_sf"/>
</dbReference>
<dbReference type="InterPro" id="IPR020568">
    <property type="entry name" value="Ribosomal_Su5_D2-typ_SF"/>
</dbReference>
<dbReference type="InterPro" id="IPR050080">
    <property type="entry name" value="RNase_PH"/>
</dbReference>
<dbReference type="InterPro" id="IPR002381">
    <property type="entry name" value="RNase_PH_bac-type"/>
</dbReference>
<dbReference type="InterPro" id="IPR018336">
    <property type="entry name" value="RNase_PH_CS"/>
</dbReference>
<dbReference type="NCBIfam" id="TIGR01966">
    <property type="entry name" value="RNasePH"/>
    <property type="match status" value="1"/>
</dbReference>
<dbReference type="PANTHER" id="PTHR11953">
    <property type="entry name" value="EXOSOME COMPLEX COMPONENT"/>
    <property type="match status" value="1"/>
</dbReference>
<dbReference type="PANTHER" id="PTHR11953:SF0">
    <property type="entry name" value="EXOSOME COMPLEX COMPONENT RRP41"/>
    <property type="match status" value="1"/>
</dbReference>
<dbReference type="Pfam" id="PF01138">
    <property type="entry name" value="RNase_PH"/>
    <property type="match status" value="1"/>
</dbReference>
<dbReference type="Pfam" id="PF03725">
    <property type="entry name" value="RNase_PH_C"/>
    <property type="match status" value="1"/>
</dbReference>
<dbReference type="SUPFAM" id="SSF55666">
    <property type="entry name" value="Ribonuclease PH domain 2-like"/>
    <property type="match status" value="1"/>
</dbReference>
<dbReference type="SUPFAM" id="SSF54211">
    <property type="entry name" value="Ribosomal protein S5 domain 2-like"/>
    <property type="match status" value="1"/>
</dbReference>
<dbReference type="PROSITE" id="PS01277">
    <property type="entry name" value="RIBONUCLEASE_PH"/>
    <property type="match status" value="1"/>
</dbReference>
<keyword id="KW-0548">Nucleotidyltransferase</keyword>
<keyword id="KW-1185">Reference proteome</keyword>
<keyword id="KW-0694">RNA-binding</keyword>
<keyword id="KW-0698">rRNA processing</keyword>
<keyword id="KW-0808">Transferase</keyword>
<keyword id="KW-0819">tRNA processing</keyword>
<keyword id="KW-0820">tRNA-binding</keyword>
<name>RNPH_MYCTA</name>
<evidence type="ECO:0000255" key="1">
    <source>
        <dbReference type="HAMAP-Rule" id="MF_00564"/>
    </source>
</evidence>
<proteinExistence type="inferred from homology"/>
<reference key="1">
    <citation type="journal article" date="2008" name="PLoS ONE">
        <title>Genetic basis of virulence attenuation revealed by comparative genomic analysis of Mycobacterium tuberculosis strain H37Ra versus H37Rv.</title>
        <authorList>
            <person name="Zheng H."/>
            <person name="Lu L."/>
            <person name="Wang B."/>
            <person name="Pu S."/>
            <person name="Zhang X."/>
            <person name="Zhu G."/>
            <person name="Shi W."/>
            <person name="Zhang L."/>
            <person name="Wang H."/>
            <person name="Wang S."/>
            <person name="Zhao G."/>
            <person name="Zhang Y."/>
        </authorList>
    </citation>
    <scope>NUCLEOTIDE SEQUENCE [LARGE SCALE GENOMIC DNA]</scope>
    <source>
        <strain>ATCC 25177 / H37Ra</strain>
    </source>
</reference>
<sequence>MSKREDGRLDHELRPVIITRGFTENPAGSVLIEFGHTKVLCTASVTEGVPRWRKATGLGWLTAEYAMLPSATHSRSDRESVRGRLSGRTQEISRLIGRSLRACIDLAALGENTIAIDCDVLQADGGTRTAAITGAYVALADAVTYLSAAGKLSDPRPLSCAIAAVSVGVVDGRIRVDLPYEEDSRAEVDMNVVATDTGTLVEIQGTGEGATFARSTLDKLLDMALGACDTLFAAQRDALALPYPGVLPQGPPPPKAFGT</sequence>
<organism>
    <name type="scientific">Mycobacterium tuberculosis (strain ATCC 25177 / H37Ra)</name>
    <dbReference type="NCBI Taxonomy" id="419947"/>
    <lineage>
        <taxon>Bacteria</taxon>
        <taxon>Bacillati</taxon>
        <taxon>Actinomycetota</taxon>
        <taxon>Actinomycetes</taxon>
        <taxon>Mycobacteriales</taxon>
        <taxon>Mycobacteriaceae</taxon>
        <taxon>Mycobacterium</taxon>
        <taxon>Mycobacterium tuberculosis complex</taxon>
    </lineage>
</organism>
<comment type="function">
    <text evidence="1">Phosphorolytic 3'-5' exoribonuclease that plays an important role in tRNA 3'-end maturation. Removes nucleotide residues following the 3'-CCA terminus of tRNAs; can also add nucleotides to the ends of RNA molecules by using nucleoside diphosphates as substrates, but this may not be physiologically important. Probably plays a role in initiation of 16S rRNA degradation (leading to ribosome degradation) during starvation.</text>
</comment>
<comment type="catalytic activity">
    <reaction evidence="1">
        <text>tRNA(n+1) + phosphate = tRNA(n) + a ribonucleoside 5'-diphosphate</text>
        <dbReference type="Rhea" id="RHEA:10628"/>
        <dbReference type="Rhea" id="RHEA-COMP:17343"/>
        <dbReference type="Rhea" id="RHEA-COMP:17344"/>
        <dbReference type="ChEBI" id="CHEBI:43474"/>
        <dbReference type="ChEBI" id="CHEBI:57930"/>
        <dbReference type="ChEBI" id="CHEBI:173114"/>
        <dbReference type="EC" id="2.7.7.56"/>
    </reaction>
</comment>
<comment type="subunit">
    <text evidence="1">Homohexameric ring arranged as a trimer of dimers.</text>
</comment>
<comment type="similarity">
    <text evidence="1">Belongs to the RNase PH family.</text>
</comment>
<protein>
    <recommendedName>
        <fullName evidence="1">Ribonuclease PH</fullName>
        <shortName evidence="1">RNase PH</shortName>
        <ecNumber evidence="1">2.7.7.56</ecNumber>
    </recommendedName>
    <alternativeName>
        <fullName evidence="1">tRNA nucleotidyltransferase</fullName>
    </alternativeName>
</protein>
<accession>A5U240</accession>
<gene>
    <name evidence="1" type="primary">rph</name>
    <name type="ordered locus">MRA_1348</name>
</gene>
<feature type="chain" id="PRO_1000024834" description="Ribonuclease PH">
    <location>
        <begin position="1"/>
        <end position="259"/>
    </location>
</feature>
<feature type="binding site" evidence="1">
    <location>
        <position position="88"/>
    </location>
    <ligand>
        <name>phosphate</name>
        <dbReference type="ChEBI" id="CHEBI:43474"/>
        <note>substrate</note>
    </ligand>
</feature>
<feature type="binding site" evidence="1">
    <location>
        <begin position="126"/>
        <end position="128"/>
    </location>
    <ligand>
        <name>phosphate</name>
        <dbReference type="ChEBI" id="CHEBI:43474"/>
        <note>substrate</note>
    </ligand>
</feature>